<organism>
    <name type="scientific">Leuconostoc mesenteroides subsp. mesenteroides (strain ATCC 8293 / DSM 20343 / BCRC 11652 / CCM 1803 / JCM 6124 / NCDO 523 / NBRC 100496 / NCIMB 8023 / NCTC 12954 / NRRL B-1118 / 37Y)</name>
    <dbReference type="NCBI Taxonomy" id="203120"/>
    <lineage>
        <taxon>Bacteria</taxon>
        <taxon>Bacillati</taxon>
        <taxon>Bacillota</taxon>
        <taxon>Bacilli</taxon>
        <taxon>Lactobacillales</taxon>
        <taxon>Lactobacillaceae</taxon>
        <taxon>Leuconostoc</taxon>
    </lineage>
</organism>
<feature type="chain" id="PRO_1000052241" description="Large ribosomal subunit protein uL24">
    <location>
        <begin position="1"/>
        <end position="102"/>
    </location>
</feature>
<protein>
    <recommendedName>
        <fullName evidence="1">Large ribosomal subunit protein uL24</fullName>
    </recommendedName>
    <alternativeName>
        <fullName evidence="2">50S ribosomal protein L24</fullName>
    </alternativeName>
</protein>
<gene>
    <name evidence="1" type="primary">rplX</name>
    <name type="ordered locus">LEUM_0207</name>
</gene>
<dbReference type="EMBL" id="CP000414">
    <property type="protein sequence ID" value="ABJ61338.1"/>
    <property type="molecule type" value="Genomic_DNA"/>
</dbReference>
<dbReference type="RefSeq" id="WP_011679135.1">
    <property type="nucleotide sequence ID" value="NC_008531.1"/>
</dbReference>
<dbReference type="SMR" id="Q03ZN4"/>
<dbReference type="EnsemblBacteria" id="ABJ61338">
    <property type="protein sequence ID" value="ABJ61338"/>
    <property type="gene ID" value="LEUM_0207"/>
</dbReference>
<dbReference type="GeneID" id="29576530"/>
<dbReference type="KEGG" id="lme:LEUM_0207"/>
<dbReference type="eggNOG" id="COG0198">
    <property type="taxonomic scope" value="Bacteria"/>
</dbReference>
<dbReference type="HOGENOM" id="CLU_093315_2_0_9"/>
<dbReference type="Proteomes" id="UP000000362">
    <property type="component" value="Chromosome"/>
</dbReference>
<dbReference type="GO" id="GO:1990904">
    <property type="term" value="C:ribonucleoprotein complex"/>
    <property type="evidence" value="ECO:0007669"/>
    <property type="project" value="UniProtKB-KW"/>
</dbReference>
<dbReference type="GO" id="GO:0005840">
    <property type="term" value="C:ribosome"/>
    <property type="evidence" value="ECO:0007669"/>
    <property type="project" value="UniProtKB-KW"/>
</dbReference>
<dbReference type="GO" id="GO:0019843">
    <property type="term" value="F:rRNA binding"/>
    <property type="evidence" value="ECO:0007669"/>
    <property type="project" value="UniProtKB-UniRule"/>
</dbReference>
<dbReference type="GO" id="GO:0003735">
    <property type="term" value="F:structural constituent of ribosome"/>
    <property type="evidence" value="ECO:0007669"/>
    <property type="project" value="InterPro"/>
</dbReference>
<dbReference type="GO" id="GO:0006412">
    <property type="term" value="P:translation"/>
    <property type="evidence" value="ECO:0007669"/>
    <property type="project" value="UniProtKB-UniRule"/>
</dbReference>
<dbReference type="CDD" id="cd06089">
    <property type="entry name" value="KOW_RPL26"/>
    <property type="match status" value="1"/>
</dbReference>
<dbReference type="FunFam" id="2.30.30.30:FF:000004">
    <property type="entry name" value="50S ribosomal protein L24"/>
    <property type="match status" value="1"/>
</dbReference>
<dbReference type="Gene3D" id="2.30.30.30">
    <property type="match status" value="1"/>
</dbReference>
<dbReference type="HAMAP" id="MF_01326_B">
    <property type="entry name" value="Ribosomal_uL24_B"/>
    <property type="match status" value="1"/>
</dbReference>
<dbReference type="InterPro" id="IPR005824">
    <property type="entry name" value="KOW"/>
</dbReference>
<dbReference type="InterPro" id="IPR014722">
    <property type="entry name" value="Rib_uL2_dom2"/>
</dbReference>
<dbReference type="InterPro" id="IPR003256">
    <property type="entry name" value="Ribosomal_uL24"/>
</dbReference>
<dbReference type="InterPro" id="IPR005825">
    <property type="entry name" value="Ribosomal_uL24_CS"/>
</dbReference>
<dbReference type="InterPro" id="IPR041988">
    <property type="entry name" value="Ribosomal_uL24_KOW"/>
</dbReference>
<dbReference type="InterPro" id="IPR008991">
    <property type="entry name" value="Translation_prot_SH3-like_sf"/>
</dbReference>
<dbReference type="NCBIfam" id="TIGR01079">
    <property type="entry name" value="rplX_bact"/>
    <property type="match status" value="1"/>
</dbReference>
<dbReference type="PANTHER" id="PTHR12903">
    <property type="entry name" value="MITOCHONDRIAL RIBOSOMAL PROTEIN L24"/>
    <property type="match status" value="1"/>
</dbReference>
<dbReference type="Pfam" id="PF00467">
    <property type="entry name" value="KOW"/>
    <property type="match status" value="1"/>
</dbReference>
<dbReference type="Pfam" id="PF17136">
    <property type="entry name" value="ribosomal_L24"/>
    <property type="match status" value="1"/>
</dbReference>
<dbReference type="SUPFAM" id="SSF50104">
    <property type="entry name" value="Translation proteins SH3-like domain"/>
    <property type="match status" value="1"/>
</dbReference>
<dbReference type="PROSITE" id="PS01108">
    <property type="entry name" value="RIBOSOMAL_L24"/>
    <property type="match status" value="1"/>
</dbReference>
<evidence type="ECO:0000255" key="1">
    <source>
        <dbReference type="HAMAP-Rule" id="MF_01326"/>
    </source>
</evidence>
<evidence type="ECO:0000305" key="2"/>
<comment type="function">
    <text evidence="1">One of two assembly initiator proteins, it binds directly to the 5'-end of the 23S rRNA, where it nucleates assembly of the 50S subunit.</text>
</comment>
<comment type="function">
    <text evidence="1">One of the proteins that surrounds the polypeptide exit tunnel on the outside of the subunit.</text>
</comment>
<comment type="subunit">
    <text evidence="1">Part of the 50S ribosomal subunit.</text>
</comment>
<comment type="similarity">
    <text evidence="1">Belongs to the universal ribosomal protein uL24 family.</text>
</comment>
<name>RL24_LEUMM</name>
<reference key="1">
    <citation type="journal article" date="2006" name="Proc. Natl. Acad. Sci. U.S.A.">
        <title>Comparative genomics of the lactic acid bacteria.</title>
        <authorList>
            <person name="Makarova K.S."/>
            <person name="Slesarev A."/>
            <person name="Wolf Y.I."/>
            <person name="Sorokin A."/>
            <person name="Mirkin B."/>
            <person name="Koonin E.V."/>
            <person name="Pavlov A."/>
            <person name="Pavlova N."/>
            <person name="Karamychev V."/>
            <person name="Polouchine N."/>
            <person name="Shakhova V."/>
            <person name="Grigoriev I."/>
            <person name="Lou Y."/>
            <person name="Rohksar D."/>
            <person name="Lucas S."/>
            <person name="Huang K."/>
            <person name="Goodstein D.M."/>
            <person name="Hawkins T."/>
            <person name="Plengvidhya V."/>
            <person name="Welker D."/>
            <person name="Hughes J."/>
            <person name="Goh Y."/>
            <person name="Benson A."/>
            <person name="Baldwin K."/>
            <person name="Lee J.-H."/>
            <person name="Diaz-Muniz I."/>
            <person name="Dosti B."/>
            <person name="Smeianov V."/>
            <person name="Wechter W."/>
            <person name="Barabote R."/>
            <person name="Lorca G."/>
            <person name="Altermann E."/>
            <person name="Barrangou R."/>
            <person name="Ganesan B."/>
            <person name="Xie Y."/>
            <person name="Rawsthorne H."/>
            <person name="Tamir D."/>
            <person name="Parker C."/>
            <person name="Breidt F."/>
            <person name="Broadbent J.R."/>
            <person name="Hutkins R."/>
            <person name="O'Sullivan D."/>
            <person name="Steele J."/>
            <person name="Unlu G."/>
            <person name="Saier M.H. Jr."/>
            <person name="Klaenhammer T."/>
            <person name="Richardson P."/>
            <person name="Kozyavkin S."/>
            <person name="Weimer B.C."/>
            <person name="Mills D.A."/>
        </authorList>
    </citation>
    <scope>NUCLEOTIDE SEQUENCE [LARGE SCALE GENOMIC DNA]</scope>
    <source>
        <strain>ATCC 8293 / DSM 20343 / BCRC 11652 / CCM 1803 / JCM 6124 / NCDO 523 / NBRC 100496 / NCIMB 8023 / NCTC 12954 / NRRL B-1118 / 37Y</strain>
    </source>
</reference>
<accession>Q03ZN4</accession>
<sequence>MFVKTGDKVRVIAGKDKGKEGTITKTVAGKDRVVVEGVNIVKKHQKPSNEYPQGGVIDIEAPIHVSNVQLLDPSTNEPTRVGFKVEDGKKIRVSKKSGNVLG</sequence>
<proteinExistence type="inferred from homology"/>
<keyword id="KW-1185">Reference proteome</keyword>
<keyword id="KW-0687">Ribonucleoprotein</keyword>
<keyword id="KW-0689">Ribosomal protein</keyword>
<keyword id="KW-0694">RNA-binding</keyword>
<keyword id="KW-0699">rRNA-binding</keyword>